<keyword id="KW-0067">ATP-binding</keyword>
<keyword id="KW-0997">Cell inner membrane</keyword>
<keyword id="KW-1003">Cell membrane</keyword>
<keyword id="KW-0472">Membrane</keyword>
<keyword id="KW-0547">Nucleotide-binding</keyword>
<keyword id="KW-0614">Plasmid</keyword>
<keyword id="KW-1185">Reference proteome</keyword>
<keyword id="KW-0813">Transport</keyword>
<comment type="function">
    <text>Probably part of a binding-protein-dependent transport system y4fNOP. Probably responsible for energy coupling to the transport system.</text>
</comment>
<comment type="subcellular location">
    <subcellularLocation>
        <location evidence="2">Cell inner membrane</location>
        <topology evidence="2">Peripheral membrane protein</topology>
    </subcellularLocation>
</comment>
<comment type="similarity">
    <text evidence="2">Belongs to the ABC transporter superfamily.</text>
</comment>
<accession>P55453</accession>
<feature type="chain" id="PRO_0000093270" description="Uncharacterized ABC transporter ATP-binding protein y4fO">
    <location>
        <begin position="1"/>
        <end position="339"/>
    </location>
</feature>
<feature type="domain" description="ABC transporter" evidence="1">
    <location>
        <begin position="13"/>
        <end position="243"/>
    </location>
</feature>
<feature type="binding site" evidence="1">
    <location>
        <begin position="45"/>
        <end position="52"/>
    </location>
    <ligand>
        <name>ATP</name>
        <dbReference type="ChEBI" id="CHEBI:30616"/>
    </ligand>
</feature>
<dbReference type="EMBL" id="U00090">
    <property type="protein sequence ID" value="AAB91671.1"/>
    <property type="molecule type" value="Genomic_DNA"/>
</dbReference>
<dbReference type="RefSeq" id="NP_443859.1">
    <property type="nucleotide sequence ID" value="NC_000914.2"/>
</dbReference>
<dbReference type="SMR" id="P55453"/>
<dbReference type="KEGG" id="rhi:NGR_a03670"/>
<dbReference type="PATRIC" id="fig|394.7.peg.375"/>
<dbReference type="eggNOG" id="COG3842">
    <property type="taxonomic scope" value="Bacteria"/>
</dbReference>
<dbReference type="HOGENOM" id="CLU_000604_1_1_5"/>
<dbReference type="OrthoDB" id="9802264at2"/>
<dbReference type="Proteomes" id="UP000001054">
    <property type="component" value="Plasmid pNGR234a"/>
</dbReference>
<dbReference type="GO" id="GO:0055052">
    <property type="term" value="C:ATP-binding cassette (ABC) transporter complex, substrate-binding subunit-containing"/>
    <property type="evidence" value="ECO:0007669"/>
    <property type="project" value="TreeGrafter"/>
</dbReference>
<dbReference type="GO" id="GO:0015408">
    <property type="term" value="F:ABC-type ferric iron transporter activity"/>
    <property type="evidence" value="ECO:0007669"/>
    <property type="project" value="InterPro"/>
</dbReference>
<dbReference type="GO" id="GO:0005524">
    <property type="term" value="F:ATP binding"/>
    <property type="evidence" value="ECO:0007669"/>
    <property type="project" value="UniProtKB-KW"/>
</dbReference>
<dbReference type="GO" id="GO:0016887">
    <property type="term" value="F:ATP hydrolysis activity"/>
    <property type="evidence" value="ECO:0007669"/>
    <property type="project" value="InterPro"/>
</dbReference>
<dbReference type="CDD" id="cd03259">
    <property type="entry name" value="ABC_Carb_Solutes_like"/>
    <property type="match status" value="1"/>
</dbReference>
<dbReference type="FunFam" id="3.40.50.300:FF:000042">
    <property type="entry name" value="Maltose/maltodextrin ABC transporter, ATP-binding protein"/>
    <property type="match status" value="1"/>
</dbReference>
<dbReference type="Gene3D" id="3.40.50.300">
    <property type="entry name" value="P-loop containing nucleotide triphosphate hydrolases"/>
    <property type="match status" value="1"/>
</dbReference>
<dbReference type="InterPro" id="IPR003593">
    <property type="entry name" value="AAA+_ATPase"/>
</dbReference>
<dbReference type="InterPro" id="IPR003439">
    <property type="entry name" value="ABC_transporter-like_ATP-bd"/>
</dbReference>
<dbReference type="InterPro" id="IPR017871">
    <property type="entry name" value="ABC_transporter-like_CS"/>
</dbReference>
<dbReference type="InterPro" id="IPR015853">
    <property type="entry name" value="ABC_transpr_FbpC"/>
</dbReference>
<dbReference type="InterPro" id="IPR047641">
    <property type="entry name" value="ABC_transpr_MalK/UgpC-like"/>
</dbReference>
<dbReference type="InterPro" id="IPR008995">
    <property type="entry name" value="Mo/tungstate-bd_C_term_dom"/>
</dbReference>
<dbReference type="InterPro" id="IPR027417">
    <property type="entry name" value="P-loop_NTPase"/>
</dbReference>
<dbReference type="InterPro" id="IPR013611">
    <property type="entry name" value="Transp-assoc_OB_typ2"/>
</dbReference>
<dbReference type="PANTHER" id="PTHR43875">
    <property type="entry name" value="MALTODEXTRIN IMPORT ATP-BINDING PROTEIN MSMX"/>
    <property type="match status" value="1"/>
</dbReference>
<dbReference type="PANTHER" id="PTHR43875:SF1">
    <property type="entry name" value="OSMOPROTECTIVE COMPOUNDS UPTAKE ATP-BINDING PROTEIN GGTA"/>
    <property type="match status" value="1"/>
</dbReference>
<dbReference type="Pfam" id="PF00005">
    <property type="entry name" value="ABC_tran"/>
    <property type="match status" value="1"/>
</dbReference>
<dbReference type="Pfam" id="PF08402">
    <property type="entry name" value="TOBE_2"/>
    <property type="match status" value="1"/>
</dbReference>
<dbReference type="SMART" id="SM00382">
    <property type="entry name" value="AAA"/>
    <property type="match status" value="1"/>
</dbReference>
<dbReference type="SUPFAM" id="SSF50331">
    <property type="entry name" value="MOP-like"/>
    <property type="match status" value="1"/>
</dbReference>
<dbReference type="SUPFAM" id="SSF52540">
    <property type="entry name" value="P-loop containing nucleoside triphosphate hydrolases"/>
    <property type="match status" value="1"/>
</dbReference>
<dbReference type="PROSITE" id="PS00211">
    <property type="entry name" value="ABC_TRANSPORTER_1"/>
    <property type="match status" value="1"/>
</dbReference>
<dbReference type="PROSITE" id="PS50893">
    <property type="entry name" value="ABC_TRANSPORTER_2"/>
    <property type="match status" value="1"/>
</dbReference>
<organism>
    <name type="scientific">Sinorhizobium fredii (strain NBRC 101917 / NGR234)</name>
    <dbReference type="NCBI Taxonomy" id="394"/>
    <lineage>
        <taxon>Bacteria</taxon>
        <taxon>Pseudomonadati</taxon>
        <taxon>Pseudomonadota</taxon>
        <taxon>Alphaproteobacteria</taxon>
        <taxon>Hyphomicrobiales</taxon>
        <taxon>Rhizobiaceae</taxon>
        <taxon>Sinorhizobium/Ensifer group</taxon>
        <taxon>Sinorhizobium</taxon>
    </lineage>
</organism>
<geneLocation type="plasmid">
    <name>sym pNGR234a</name>
</geneLocation>
<proteinExistence type="inferred from homology"/>
<evidence type="ECO:0000255" key="1">
    <source>
        <dbReference type="PROSITE-ProRule" id="PRU00434"/>
    </source>
</evidence>
<evidence type="ECO:0000305" key="2"/>
<sequence>MDRRSRAMADSVLSLNKLDVGFPGMTVVRDLNLDVADGAFVSLLGPSGSGKSSVLRTIAGLLPALGGRVLLEGQDITALPPERRNVGIVFQNYALFPTMSAFENIAFALRVAKKSKAEVERRVGEVAEMAGISDQLDKKPANMSGGQQQRVAIARALVTGSRVLLFDEPLSNLDAKVRAAMRKEIKRLQSELGFTAIFVTHDQEDALTMSDLIVVLNHGKIEQIGDGRTLYRKPATPFICEFIGVSNELAPPLAARLLGYDVKGRSFLRHEDVLLGAVAGVPARVNHVEFLGAHSRVDLEVEGHALSAMLIGDQLPEPGSTVSLGIRPGAAHVFQEVTG</sequence>
<gene>
    <name type="ordered locus">NGR_a03670</name>
    <name type="ORF">y4fO</name>
</gene>
<reference key="1">
    <citation type="journal article" date="1997" name="Nature">
        <title>Molecular basis of symbiosis between Rhizobium and legumes.</title>
        <authorList>
            <person name="Freiberg C.A."/>
            <person name="Fellay R."/>
            <person name="Bairoch A."/>
            <person name="Broughton W.J."/>
            <person name="Rosenthal A."/>
            <person name="Perret X."/>
        </authorList>
    </citation>
    <scope>NUCLEOTIDE SEQUENCE [LARGE SCALE GENOMIC DNA]</scope>
    <source>
        <strain>NBRC 101917 / NGR234</strain>
    </source>
</reference>
<reference key="2">
    <citation type="journal article" date="2009" name="Appl. Environ. Microbiol.">
        <title>Rhizobium sp. strain NGR234 possesses a remarkable number of secretion systems.</title>
        <authorList>
            <person name="Schmeisser C."/>
            <person name="Liesegang H."/>
            <person name="Krysciak D."/>
            <person name="Bakkou N."/>
            <person name="Le Quere A."/>
            <person name="Wollherr A."/>
            <person name="Heinemeyer I."/>
            <person name="Morgenstern B."/>
            <person name="Pommerening-Roeser A."/>
            <person name="Flores M."/>
            <person name="Palacios R."/>
            <person name="Brenner S."/>
            <person name="Gottschalk G."/>
            <person name="Schmitz R.A."/>
            <person name="Broughton W.J."/>
            <person name="Perret X."/>
            <person name="Strittmatter A.W."/>
            <person name="Streit W.R."/>
        </authorList>
    </citation>
    <scope>NUCLEOTIDE SEQUENCE [LARGE SCALE GENOMIC DNA]</scope>
    <source>
        <strain>NBRC 101917 / NGR234</strain>
    </source>
</reference>
<name>Y4FO_SINFN</name>
<protein>
    <recommendedName>
        <fullName>Uncharacterized ABC transporter ATP-binding protein y4fO</fullName>
    </recommendedName>
</protein>